<name>MBIP1_HUMAN</name>
<dbReference type="EMBL" id="AB038523">
    <property type="protein sequence ID" value="BAA94083.1"/>
    <property type="molecule type" value="mRNA"/>
</dbReference>
<dbReference type="EMBL" id="AF208857">
    <property type="protein sequence ID" value="AAF64271.1"/>
    <property type="molecule type" value="mRNA"/>
</dbReference>
<dbReference type="EMBL" id="BX248287">
    <property type="protein sequence ID" value="CAD62615.1"/>
    <property type="status" value="ALT_INIT"/>
    <property type="molecule type" value="mRNA"/>
</dbReference>
<dbReference type="EMBL" id="AL137226">
    <property type="status" value="NOT_ANNOTATED_CDS"/>
    <property type="molecule type" value="Genomic_DNA"/>
</dbReference>
<dbReference type="EMBL" id="BC005197">
    <property type="protein sequence ID" value="AAH05197.1"/>
    <property type="molecule type" value="mRNA"/>
</dbReference>
<dbReference type="EMBL" id="BC016821">
    <property type="protein sequence ID" value="AAH16821.1"/>
    <property type="molecule type" value="mRNA"/>
</dbReference>
<dbReference type="CCDS" id="CCDS45096.1">
    <molecule id="Q9NS73-5"/>
</dbReference>
<dbReference type="CCDS" id="CCDS76672.1">
    <molecule id="Q9NS73-3"/>
</dbReference>
<dbReference type="CCDS" id="CCDS9658.1">
    <molecule id="Q9NS73-1"/>
</dbReference>
<dbReference type="RefSeq" id="NP_001138363.1">
    <molecule id="Q9NS73-5"/>
    <property type="nucleotide sequence ID" value="NM_001144891.2"/>
</dbReference>
<dbReference type="RefSeq" id="NP_001295039.1">
    <molecule id="Q9NS73-3"/>
    <property type="nucleotide sequence ID" value="NM_001308110.2"/>
</dbReference>
<dbReference type="RefSeq" id="NP_057670.2">
    <molecule id="Q9NS73-1"/>
    <property type="nucleotide sequence ID" value="NM_016586.3"/>
</dbReference>
<dbReference type="SMR" id="Q9NS73"/>
<dbReference type="BioGRID" id="119612">
    <property type="interactions" value="172"/>
</dbReference>
<dbReference type="ComplexPortal" id="CPX-1004">
    <property type="entry name" value="PCAF-containing ATAC complex"/>
</dbReference>
<dbReference type="ComplexPortal" id="CPX-997">
    <property type="entry name" value="GCN5-containing ATAC complex"/>
</dbReference>
<dbReference type="CORUM" id="Q9NS73"/>
<dbReference type="FunCoup" id="Q9NS73">
    <property type="interactions" value="2474"/>
</dbReference>
<dbReference type="IntAct" id="Q9NS73">
    <property type="interactions" value="140"/>
</dbReference>
<dbReference type="MINT" id="Q9NS73"/>
<dbReference type="STRING" id="9606.ENSP00000399718"/>
<dbReference type="GlyGen" id="Q9NS73">
    <property type="glycosylation" value="1 site, 1 O-linked glycan (1 site)"/>
</dbReference>
<dbReference type="iPTMnet" id="Q9NS73"/>
<dbReference type="PhosphoSitePlus" id="Q9NS73"/>
<dbReference type="BioMuta" id="MBIP"/>
<dbReference type="DMDM" id="160112798"/>
<dbReference type="jPOST" id="Q9NS73"/>
<dbReference type="MassIVE" id="Q9NS73"/>
<dbReference type="PaxDb" id="9606-ENSP00000399718"/>
<dbReference type="PeptideAtlas" id="Q9NS73"/>
<dbReference type="ProteomicsDB" id="82502">
    <molecule id="Q9NS73-1"/>
</dbReference>
<dbReference type="ProteomicsDB" id="82503">
    <molecule id="Q9NS73-2"/>
</dbReference>
<dbReference type="ProteomicsDB" id="82504">
    <molecule id="Q9NS73-3"/>
</dbReference>
<dbReference type="ProteomicsDB" id="82505">
    <molecule id="Q9NS73-5"/>
</dbReference>
<dbReference type="Pumba" id="Q9NS73"/>
<dbReference type="Antibodypedia" id="166">
    <property type="antibodies" value="142 antibodies from 26 providers"/>
</dbReference>
<dbReference type="DNASU" id="51562"/>
<dbReference type="Ensembl" id="ENST00000318473.11">
    <molecule id="Q9NS73-5"/>
    <property type="protein sequence ID" value="ENSP00000324444.5"/>
    <property type="gene ID" value="ENSG00000151332.20"/>
</dbReference>
<dbReference type="Ensembl" id="ENST00000359527.11">
    <molecule id="Q9NS73-3"/>
    <property type="protein sequence ID" value="ENSP00000352517.5"/>
    <property type="gene ID" value="ENSG00000151332.20"/>
</dbReference>
<dbReference type="Ensembl" id="ENST00000416007.9">
    <molecule id="Q9NS73-1"/>
    <property type="protein sequence ID" value="ENSP00000399718.2"/>
    <property type="gene ID" value="ENSG00000151332.20"/>
</dbReference>
<dbReference type="GeneID" id="51562"/>
<dbReference type="KEGG" id="hsa:51562"/>
<dbReference type="MANE-Select" id="ENST00000416007.9">
    <property type="protein sequence ID" value="ENSP00000399718.2"/>
    <property type="RefSeq nucleotide sequence ID" value="NM_016586.3"/>
    <property type="RefSeq protein sequence ID" value="NP_057670.2"/>
</dbReference>
<dbReference type="UCSC" id="uc001wtm.2">
    <molecule id="Q9NS73-1"/>
    <property type="organism name" value="human"/>
</dbReference>
<dbReference type="AGR" id="HGNC:20427"/>
<dbReference type="CTD" id="51562"/>
<dbReference type="DisGeNET" id="51562"/>
<dbReference type="GeneCards" id="MBIP"/>
<dbReference type="HGNC" id="HGNC:20427">
    <property type="gene designation" value="MBIP"/>
</dbReference>
<dbReference type="HPA" id="ENSG00000151332">
    <property type="expression patterns" value="Low tissue specificity"/>
</dbReference>
<dbReference type="MIM" id="609431">
    <property type="type" value="gene"/>
</dbReference>
<dbReference type="neXtProt" id="NX_Q9NS73"/>
<dbReference type="OpenTargets" id="ENSG00000151332"/>
<dbReference type="PharmGKB" id="PA134929415"/>
<dbReference type="VEuPathDB" id="HostDB:ENSG00000151332"/>
<dbReference type="eggNOG" id="ENOG502R8QG">
    <property type="taxonomic scope" value="Eukaryota"/>
</dbReference>
<dbReference type="GeneTree" id="ENSGT00510000047831"/>
<dbReference type="HOGENOM" id="CLU_069631_0_0_1"/>
<dbReference type="InParanoid" id="Q9NS73"/>
<dbReference type="OMA" id="HKSNSML"/>
<dbReference type="OrthoDB" id="5531344at2759"/>
<dbReference type="PAN-GO" id="Q9NS73">
    <property type="GO annotations" value="1 GO annotation based on evolutionary models"/>
</dbReference>
<dbReference type="PhylomeDB" id="Q9NS73"/>
<dbReference type="TreeFam" id="TF331763"/>
<dbReference type="PathwayCommons" id="Q9NS73"/>
<dbReference type="Reactome" id="R-HSA-3214847">
    <property type="pathway name" value="HATs acetylate histones"/>
</dbReference>
<dbReference type="Reactome" id="R-HSA-9772755">
    <property type="pathway name" value="Formation of WDR5-containing histone-modifying complexes"/>
</dbReference>
<dbReference type="SignaLink" id="Q9NS73"/>
<dbReference type="BioGRID-ORCS" id="51562">
    <property type="hits" value="17 hits in 1154 CRISPR screens"/>
</dbReference>
<dbReference type="ChiTaRS" id="MBIP">
    <property type="organism name" value="human"/>
</dbReference>
<dbReference type="GenomeRNAi" id="51562"/>
<dbReference type="Pharos" id="Q9NS73">
    <property type="development level" value="Tbio"/>
</dbReference>
<dbReference type="PRO" id="PR:Q9NS73"/>
<dbReference type="Proteomes" id="UP000005640">
    <property type="component" value="Chromosome 14"/>
</dbReference>
<dbReference type="RNAct" id="Q9NS73">
    <property type="molecule type" value="protein"/>
</dbReference>
<dbReference type="Bgee" id="ENSG00000151332">
    <property type="expression patterns" value="Expressed in left lobe of thyroid gland and 194 other cell types or tissues"/>
</dbReference>
<dbReference type="ExpressionAtlas" id="Q9NS73">
    <property type="expression patterns" value="baseline and differential"/>
</dbReference>
<dbReference type="GO" id="GO:0140672">
    <property type="term" value="C:ATAC complex"/>
    <property type="evidence" value="ECO:0000314"/>
    <property type="project" value="BHF-UCL"/>
</dbReference>
<dbReference type="GO" id="GO:0005829">
    <property type="term" value="C:cytosol"/>
    <property type="evidence" value="ECO:0000314"/>
    <property type="project" value="HPA"/>
</dbReference>
<dbReference type="GO" id="GO:0072686">
    <property type="term" value="C:mitotic spindle"/>
    <property type="evidence" value="ECO:0000303"/>
    <property type="project" value="ComplexPortal"/>
</dbReference>
<dbReference type="GO" id="GO:0005730">
    <property type="term" value="C:nucleolus"/>
    <property type="evidence" value="ECO:0000314"/>
    <property type="project" value="HPA"/>
</dbReference>
<dbReference type="GO" id="GO:0005654">
    <property type="term" value="C:nucleoplasm"/>
    <property type="evidence" value="ECO:0000314"/>
    <property type="project" value="HPA"/>
</dbReference>
<dbReference type="GO" id="GO:0042802">
    <property type="term" value="F:identical protein binding"/>
    <property type="evidence" value="ECO:0000353"/>
    <property type="project" value="IntAct"/>
</dbReference>
<dbReference type="GO" id="GO:0004860">
    <property type="term" value="F:protein kinase inhibitor activity"/>
    <property type="evidence" value="ECO:0000314"/>
    <property type="project" value="GO_Central"/>
</dbReference>
<dbReference type="GO" id="GO:0000122">
    <property type="term" value="P:negative regulation of transcription by RNA polymerase II"/>
    <property type="evidence" value="ECO:0000314"/>
    <property type="project" value="BHF-UCL"/>
</dbReference>
<dbReference type="GO" id="GO:0010628">
    <property type="term" value="P:positive regulation of gene expression"/>
    <property type="evidence" value="ECO:0000314"/>
    <property type="project" value="GO_Central"/>
</dbReference>
<dbReference type="GO" id="GO:0046330">
    <property type="term" value="P:positive regulation of JNK cascade"/>
    <property type="evidence" value="ECO:0000314"/>
    <property type="project" value="GO_Central"/>
</dbReference>
<dbReference type="GO" id="GO:0051726">
    <property type="term" value="P:regulation of cell cycle"/>
    <property type="evidence" value="ECO:0000315"/>
    <property type="project" value="ComplexPortal"/>
</dbReference>
<dbReference type="GO" id="GO:0051302">
    <property type="term" value="P:regulation of cell division"/>
    <property type="evidence" value="ECO:0000314"/>
    <property type="project" value="ComplexPortal"/>
</dbReference>
<dbReference type="GO" id="GO:0006355">
    <property type="term" value="P:regulation of DNA-templated transcription"/>
    <property type="evidence" value="ECO:0000315"/>
    <property type="project" value="ComplexPortal"/>
</dbReference>
<dbReference type="GO" id="GO:0045995">
    <property type="term" value="P:regulation of embryonic development"/>
    <property type="evidence" value="ECO:0000266"/>
    <property type="project" value="ComplexPortal"/>
</dbReference>
<dbReference type="GO" id="GO:0006357">
    <property type="term" value="P:regulation of transcription by RNA polymerase II"/>
    <property type="evidence" value="ECO:0000314"/>
    <property type="project" value="ComplexPortal"/>
</dbReference>
<dbReference type="PANTHER" id="PTHR23404">
    <property type="entry name" value="MOLYBDOPTERIN SYNTHASE RELATED"/>
    <property type="match status" value="1"/>
</dbReference>
<evidence type="ECO:0000250" key="1">
    <source>
        <dbReference type="UniProtKB" id="Q99LQ1"/>
    </source>
</evidence>
<evidence type="ECO:0000255" key="2"/>
<evidence type="ECO:0000269" key="3">
    <source>
    </source>
</evidence>
<evidence type="ECO:0000269" key="4">
    <source>
    </source>
</evidence>
<evidence type="ECO:0000269" key="5">
    <source>
    </source>
</evidence>
<evidence type="ECO:0000269" key="6">
    <source>
    </source>
</evidence>
<evidence type="ECO:0000303" key="7">
    <source>
    </source>
</evidence>
<evidence type="ECO:0000303" key="8">
    <source>
    </source>
</evidence>
<evidence type="ECO:0000303" key="9">
    <source ref="3"/>
</evidence>
<evidence type="ECO:0000305" key="10"/>
<evidence type="ECO:0007744" key="11">
    <source>
    </source>
</evidence>
<evidence type="ECO:0007744" key="12">
    <source>
    </source>
</evidence>
<evidence type="ECO:0007744" key="13">
    <source>
    </source>
</evidence>
<evidence type="ECO:0007744" key="14">
    <source>
    </source>
</evidence>
<evidence type="ECO:0007744" key="15">
    <source>
    </source>
</evidence>
<evidence type="ECO:0007744" key="16">
    <source>
    </source>
</evidence>
<evidence type="ECO:0007744" key="17">
    <source>
    </source>
</evidence>
<protein>
    <recommendedName>
        <fullName>MAP3K12-binding inhibitory protein 1</fullName>
    </recommendedName>
    <alternativeName>
        <fullName>MAPK upstream kinase-binding inhibitory protein</fullName>
        <shortName>MUK-binding inhibitory protein</shortName>
    </alternativeName>
</protein>
<sequence length="344" mass="39281">MAAATELNRPSSGDRNLERRCRPNLSREVLYEIFRSLHTLVGQLDLRDDVVKITIDWNKLQSLSAFQPALLFSALEQHILYLQPFLAKLQSPIKEENTTAVEEIGRTEMGNKNEVNDKFSIGDLQEEEKHKESDLRDVKKTQIHFDPEVVQIKAGKAEIDRRISAFIERKQAEINENNVREFCNVIDCNQENSCARTDAIFTPYPGFKSHVKVSRVVNTYGPQTRPEGIPGSGHKPNSMLRDCGNQAVEERLQNIEAHLRLQTGGPVPRDIYQRIKKLEDKILELEGISPEYFQSVSFSGKRRKVQPPQQNYSLAELDEKISALKQALLRKSREAESMATHHLP</sequence>
<reference key="1">
    <citation type="journal article" date="2000" name="J. Biol. Chem.">
        <title>MAPK upstream kinase (MUK)-binding inhibitory protein, a negative regulator of MUK/Dual leucine zipper-bearing kinase/leucine zipper protein kinase.</title>
        <authorList>
            <person name="Fukuyama K."/>
            <person name="Yoshida M."/>
            <person name="Yamashita A."/>
            <person name="Deyama T."/>
            <person name="Baba M."/>
            <person name="Suzuki A."/>
            <person name="Mohri H."/>
            <person name="Ikezawa Z."/>
            <person name="Nakajima H."/>
            <person name="Hirai S."/>
            <person name="Ohno S."/>
        </authorList>
    </citation>
    <scope>NUCLEOTIDE SEQUENCE [MRNA] (ISOFORM 1)</scope>
    <scope>VARIANTS HIS-7 AND SER-22</scope>
    <source>
        <tissue>Kidney</tissue>
    </source>
</reference>
<reference key="2">
    <citation type="journal article" date="2000" name="Genome Res.">
        <title>Cloning and functional analysis of cDNAs with open reading frames for 300 previously undefined genes expressed in CD34+ hematopoietic stem/progenitor cells.</title>
        <authorList>
            <person name="Zhang Q.-H."/>
            <person name="Ye M."/>
            <person name="Wu X.-Y."/>
            <person name="Ren S.-X."/>
            <person name="Zhao M."/>
            <person name="Zhao C.-J."/>
            <person name="Fu G."/>
            <person name="Shen Y."/>
            <person name="Fan H.-Y."/>
            <person name="Lu G."/>
            <person name="Zhong M."/>
            <person name="Xu X.-R."/>
            <person name="Han Z.-G."/>
            <person name="Zhang J.-W."/>
            <person name="Tao J."/>
            <person name="Huang Q.-H."/>
            <person name="Zhou J."/>
            <person name="Hu G.-X."/>
            <person name="Gu J."/>
            <person name="Chen S.-J."/>
            <person name="Chen Z."/>
        </authorList>
    </citation>
    <scope>NUCLEOTIDE SEQUENCE [LARGE SCALE MRNA] (ISOFORM 2)</scope>
    <scope>VARIANTS HIS-7 AND SER-22</scope>
    <source>
        <tissue>Bone marrow</tissue>
    </source>
</reference>
<reference key="3">
    <citation type="submission" date="2003-02" db="EMBL/GenBank/DDBJ databases">
        <title>Full-length cDNA libraries and normalization.</title>
        <authorList>
            <person name="Li W.B."/>
            <person name="Gruber C."/>
            <person name="Jessee J."/>
            <person name="Polayes D."/>
        </authorList>
    </citation>
    <scope>NUCLEOTIDE SEQUENCE [LARGE SCALE MRNA] (ISOFORM 3)</scope>
    <source>
        <tissue>Placenta</tissue>
    </source>
</reference>
<reference key="4">
    <citation type="journal article" date="2003" name="Nature">
        <title>The DNA sequence and analysis of human chromosome 14.</title>
        <authorList>
            <person name="Heilig R."/>
            <person name="Eckenberg R."/>
            <person name="Petit J.-L."/>
            <person name="Fonknechten N."/>
            <person name="Da Silva C."/>
            <person name="Cattolico L."/>
            <person name="Levy M."/>
            <person name="Barbe V."/>
            <person name="De Berardinis V."/>
            <person name="Ureta-Vidal A."/>
            <person name="Pelletier E."/>
            <person name="Vico V."/>
            <person name="Anthouard V."/>
            <person name="Rowen L."/>
            <person name="Madan A."/>
            <person name="Qin S."/>
            <person name="Sun H."/>
            <person name="Du H."/>
            <person name="Pepin K."/>
            <person name="Artiguenave F."/>
            <person name="Robert C."/>
            <person name="Cruaud C."/>
            <person name="Bruels T."/>
            <person name="Jaillon O."/>
            <person name="Friedlander L."/>
            <person name="Samson G."/>
            <person name="Brottier P."/>
            <person name="Cure S."/>
            <person name="Segurens B."/>
            <person name="Aniere F."/>
            <person name="Samain S."/>
            <person name="Crespeau H."/>
            <person name="Abbasi N."/>
            <person name="Aiach N."/>
            <person name="Boscus D."/>
            <person name="Dickhoff R."/>
            <person name="Dors M."/>
            <person name="Dubois I."/>
            <person name="Friedman C."/>
            <person name="Gouyvenoux M."/>
            <person name="James R."/>
            <person name="Madan A."/>
            <person name="Mairey-Estrada B."/>
            <person name="Mangenot S."/>
            <person name="Martins N."/>
            <person name="Menard M."/>
            <person name="Oztas S."/>
            <person name="Ratcliffe A."/>
            <person name="Shaffer T."/>
            <person name="Trask B."/>
            <person name="Vacherie B."/>
            <person name="Bellemere C."/>
            <person name="Belser C."/>
            <person name="Besnard-Gonnet M."/>
            <person name="Bartol-Mavel D."/>
            <person name="Boutard M."/>
            <person name="Briez-Silla S."/>
            <person name="Combette S."/>
            <person name="Dufosse-Laurent V."/>
            <person name="Ferron C."/>
            <person name="Lechaplais C."/>
            <person name="Louesse C."/>
            <person name="Muselet D."/>
            <person name="Magdelenat G."/>
            <person name="Pateau E."/>
            <person name="Petit E."/>
            <person name="Sirvain-Trukniewicz P."/>
            <person name="Trybou A."/>
            <person name="Vega-Czarny N."/>
            <person name="Bataille E."/>
            <person name="Bluet E."/>
            <person name="Bordelais I."/>
            <person name="Dubois M."/>
            <person name="Dumont C."/>
            <person name="Guerin T."/>
            <person name="Haffray S."/>
            <person name="Hammadi R."/>
            <person name="Muanga J."/>
            <person name="Pellouin V."/>
            <person name="Robert D."/>
            <person name="Wunderle E."/>
            <person name="Gauguet G."/>
            <person name="Roy A."/>
            <person name="Sainte-Marthe L."/>
            <person name="Verdier J."/>
            <person name="Verdier-Discala C."/>
            <person name="Hillier L.W."/>
            <person name="Fulton L."/>
            <person name="McPherson J."/>
            <person name="Matsuda F."/>
            <person name="Wilson R."/>
            <person name="Scarpelli C."/>
            <person name="Gyapay G."/>
            <person name="Wincker P."/>
            <person name="Saurin W."/>
            <person name="Quetier F."/>
            <person name="Waterston R."/>
            <person name="Hood L."/>
            <person name="Weissenbach J."/>
        </authorList>
    </citation>
    <scope>NUCLEOTIDE SEQUENCE [LARGE SCALE GENOMIC DNA]</scope>
</reference>
<reference key="5">
    <citation type="journal article" date="2004" name="Genome Res.">
        <title>The status, quality, and expansion of the NIH full-length cDNA project: the Mammalian Gene Collection (MGC).</title>
        <authorList>
            <consortium name="The MGC Project Team"/>
        </authorList>
    </citation>
    <scope>NUCLEOTIDE SEQUENCE [LARGE SCALE MRNA] (ISOFORMS 1 AND 4)</scope>
    <scope>VARIANTS HIS-7 AND SER-22</scope>
    <source>
        <tissue>Bone marrow</tissue>
        <tissue>Urinary bladder</tissue>
    </source>
</reference>
<reference key="6">
    <citation type="journal article" date="2008" name="Mol. Cell">
        <title>Kinase-selective enrichment enables quantitative phosphoproteomics of the kinome across the cell cycle.</title>
        <authorList>
            <person name="Daub H."/>
            <person name="Olsen J.V."/>
            <person name="Bairlein M."/>
            <person name="Gnad F."/>
            <person name="Oppermann F.S."/>
            <person name="Korner R."/>
            <person name="Greff Z."/>
            <person name="Keri G."/>
            <person name="Stemmann O."/>
            <person name="Mann M."/>
        </authorList>
    </citation>
    <scope>PHOSPHORYLATION [LARGE SCALE ANALYSIS] AT SER-91</scope>
    <scope>IDENTIFICATION BY MASS SPECTROMETRY [LARGE SCALE ANALYSIS]</scope>
    <source>
        <tissue>Cervix carcinoma</tissue>
    </source>
</reference>
<reference key="7">
    <citation type="journal article" date="2008" name="Proc. Natl. Acad. Sci. U.S.A.">
        <title>A quantitative atlas of mitotic phosphorylation.</title>
        <authorList>
            <person name="Dephoure N."/>
            <person name="Zhou C."/>
            <person name="Villen J."/>
            <person name="Beausoleil S.A."/>
            <person name="Bakalarski C.E."/>
            <person name="Elledge S.J."/>
            <person name="Gygi S.P."/>
        </authorList>
    </citation>
    <scope>PHOSPHORYLATION [LARGE SCALE ANALYSIS] AT SER-91</scope>
    <scope>IDENTIFICATION BY MASS SPECTROMETRY [LARGE SCALE ANALYSIS]</scope>
    <source>
        <tissue>Cervix carcinoma</tissue>
    </source>
</reference>
<reference key="8">
    <citation type="journal article" date="2009" name="Mol. Cell. Biol.">
        <title>The double-histone-acetyltransferase complex ATAC is essential for mammalian development.</title>
        <authorList>
            <person name="Guelman S."/>
            <person name="Kozuka K."/>
            <person name="Mao Y."/>
            <person name="Pham V."/>
            <person name="Solloway M.J."/>
            <person name="Wang J."/>
            <person name="Wu J."/>
            <person name="Lill J.R."/>
            <person name="Zha J."/>
        </authorList>
    </citation>
    <scope>FUNCTION</scope>
    <scope>IDENTIFICATION IN ATAC COMPLEX</scope>
</reference>
<reference key="9">
    <citation type="journal article" date="2010" name="Sci. Signal.">
        <title>Quantitative phosphoproteomics reveals widespread full phosphorylation site occupancy during mitosis.</title>
        <authorList>
            <person name="Olsen J.V."/>
            <person name="Vermeulen M."/>
            <person name="Santamaria A."/>
            <person name="Kumar C."/>
            <person name="Miller M.L."/>
            <person name="Jensen L.J."/>
            <person name="Gnad F."/>
            <person name="Cox J."/>
            <person name="Jensen T.S."/>
            <person name="Nigg E.A."/>
            <person name="Brunak S."/>
            <person name="Mann M."/>
        </authorList>
    </citation>
    <scope>PHOSPHORYLATION [LARGE SCALE ANALYSIS] AT SER-91</scope>
    <scope>IDENTIFICATION BY MASS SPECTROMETRY [LARGE SCALE ANALYSIS]</scope>
    <source>
        <tissue>Cervix carcinoma</tissue>
    </source>
</reference>
<reference key="10">
    <citation type="journal article" date="2013" name="J. Proteome Res.">
        <title>Toward a comprehensive characterization of a human cancer cell phosphoproteome.</title>
        <authorList>
            <person name="Zhou H."/>
            <person name="Di Palma S."/>
            <person name="Preisinger C."/>
            <person name="Peng M."/>
            <person name="Polat A.N."/>
            <person name="Heck A.J."/>
            <person name="Mohammed S."/>
        </authorList>
    </citation>
    <scope>PHOSPHORYLATION [LARGE SCALE ANALYSIS] AT SER-91</scope>
    <scope>IDENTIFICATION BY MASS SPECTROMETRY [LARGE SCALE ANALYSIS]</scope>
    <source>
        <tissue>Cervix carcinoma</tissue>
        <tissue>Erythroleukemia</tissue>
    </source>
</reference>
<reference key="11">
    <citation type="journal article" date="2014" name="Nat. Struct. Mol. Biol.">
        <title>Uncovering global SUMOylation signaling networks in a site-specific manner.</title>
        <authorList>
            <person name="Hendriks I.A."/>
            <person name="D'Souza R.C."/>
            <person name="Yang B."/>
            <person name="Verlaan-de Vries M."/>
            <person name="Mann M."/>
            <person name="Vertegaal A.C."/>
        </authorList>
    </citation>
    <scope>SUMOYLATION [LARGE SCALE ANALYSIS] AT LYS-94</scope>
    <scope>IDENTIFICATION BY MASS SPECTROMETRY [LARGE SCALE ANALYSIS]</scope>
</reference>
<reference key="12">
    <citation type="journal article" date="2015" name="Mol. Cell. Proteomics">
        <title>System-wide analysis of SUMOylation dynamics in response to replication stress reveals novel small ubiquitin-like modified target proteins and acceptor lysines relevant for genome stability.</title>
        <authorList>
            <person name="Xiao Z."/>
            <person name="Chang J.G."/>
            <person name="Hendriks I.A."/>
            <person name="Sigurdsson J.O."/>
            <person name="Olsen J.V."/>
            <person name="Vertegaal A.C."/>
        </authorList>
    </citation>
    <scope>SUMOYLATION [LARGE SCALE ANALYSIS] AT LYS-94 AND LYS-129</scope>
    <scope>IDENTIFICATION BY MASS SPECTROMETRY [LARGE SCALE ANALYSIS]</scope>
</reference>
<reference key="13">
    <citation type="journal article" date="2017" name="Nat. Struct. Mol. Biol.">
        <title>Site-specific mapping of the human SUMO proteome reveals co-modification with phosphorylation.</title>
        <authorList>
            <person name="Hendriks I.A."/>
            <person name="Lyon D."/>
            <person name="Young C."/>
            <person name="Jensen L.J."/>
            <person name="Vertegaal A.C."/>
            <person name="Nielsen M.L."/>
        </authorList>
    </citation>
    <scope>SUMOYLATION [LARGE SCALE ANALYSIS] AT LYS-94; LYS-118; LYS-129; LYS-139; LYS-153; LYS-235; LYS-301; LYS-304 AND LYS-325</scope>
    <scope>IDENTIFICATION BY MASS SPECTROMETRY [LARGE SCALE ANALYSIS]</scope>
</reference>
<comment type="function">
    <text evidence="6">Inhibits the MAP3K12 activity to induce the activation of the JNK/SAPK pathway. Component of the ATAC complex, a complex with histone acetyltransferase activity on histones H3 and H4.</text>
</comment>
<comment type="subunit">
    <text evidence="6">Component of the ADA2A-containing complex (ATAC), composed of KAT14, KAT2A, TADA2L, TADA3L, ZZ3, MBIP, WDR5, YEATS2, CCDC101 and DR1. In the complex, it probably interacts directly with KAT2A, KAT14 and WDR5.</text>
</comment>
<comment type="interaction">
    <interactant intactId="EBI-741953">
        <id>Q9NS73</id>
    </interactant>
    <interactant intactId="EBI-297353">
        <id>P00533</id>
        <label>EGFR</label>
    </interactant>
    <organismsDiffer>false</organismsDiffer>
    <experiments>2</experiments>
</comment>
<comment type="interaction">
    <interactant intactId="EBI-741953">
        <id>Q9NS73</id>
    </interactant>
    <interactant intactId="EBI-749393">
        <id>Q96HL7</id>
        <label>EPB41L3</label>
    </interactant>
    <organismsDiffer>false</organismsDiffer>
    <experiments>3</experiments>
</comment>
<comment type="interaction">
    <interactant intactId="EBI-741953">
        <id>Q9NS73</id>
    </interactant>
    <interactant intactId="EBI-740459">
        <id>P51116</id>
        <label>FXR2</label>
    </interactant>
    <organismsDiffer>false</organismsDiffer>
    <experiments>3</experiments>
</comment>
<comment type="interaction">
    <interactant intactId="EBI-741953">
        <id>Q9NS73</id>
    </interactant>
    <interactant intactId="EBI-750907">
        <id>Q9H8E8</id>
        <label>KAT14</label>
    </interactant>
    <organismsDiffer>false</organismsDiffer>
    <experiments>9</experiments>
</comment>
<comment type="interaction">
    <interactant intactId="EBI-741953">
        <id>Q9NS73</id>
    </interactant>
    <interactant intactId="EBI-741953">
        <id>Q9NS73</id>
        <label>MBIP</label>
    </interactant>
    <organismsDiffer>false</organismsDiffer>
    <experiments>3</experiments>
</comment>
<comment type="interaction">
    <interactant intactId="EBI-741953">
        <id>Q9NS73</id>
    </interactant>
    <interactant intactId="EBI-742388">
        <id>Q9H8W4</id>
        <label>PLEKHF2</label>
    </interactant>
    <organismsDiffer>false</organismsDiffer>
    <experiments>3</experiments>
</comment>
<comment type="interaction">
    <interactant intactId="EBI-741953">
        <id>Q9NS73</id>
    </interactant>
    <interactant intactId="EBI-745426">
        <id>Q13136</id>
        <label>PPFIA1</label>
    </interactant>
    <organismsDiffer>false</organismsDiffer>
    <experiments>3</experiments>
</comment>
<comment type="interaction">
    <interactant intactId="EBI-741953">
        <id>Q9NS73</id>
    </interactant>
    <interactant intactId="EBI-6116822">
        <id>Q8N3L3</id>
        <label>TXLNB</label>
    </interactant>
    <organismsDiffer>false</organismsDiffer>
    <experiments>4</experiments>
</comment>
<comment type="interaction">
    <interactant intactId="EBI-741953">
        <id>Q9NS73</id>
    </interactant>
    <interactant intactId="EBI-540834">
        <id>P61964</id>
        <label>WDR5</label>
    </interactant>
    <organismsDiffer>false</organismsDiffer>
    <experiments>8</experiments>
</comment>
<comment type="interaction">
    <interactant intactId="EBI-10182361">
        <id>Q9NS73-5</id>
    </interactant>
    <interactant intactId="EBI-10229433">
        <id>Q13515</id>
        <label>BFSP2</label>
    </interactant>
    <organismsDiffer>false</organismsDiffer>
    <experiments>6</experiments>
</comment>
<comment type="interaction">
    <interactant intactId="EBI-10182361">
        <id>Q9NS73-5</id>
    </interactant>
    <interactant intactId="EBI-395261">
        <id>P24863</id>
        <label>CCNC</label>
    </interactant>
    <organismsDiffer>false</organismsDiffer>
    <experiments>3</experiments>
</comment>
<comment type="interaction">
    <interactant intactId="EBI-10182361">
        <id>Q9NS73-5</id>
    </interactant>
    <interactant intactId="EBI-10233719">
        <id>Q14689-6</id>
        <label>DIP2A</label>
    </interactant>
    <organismsDiffer>false</organismsDiffer>
    <experiments>3</experiments>
</comment>
<comment type="interaction">
    <interactant intactId="EBI-10182361">
        <id>Q9NS73-5</id>
    </interactant>
    <interactant intactId="EBI-10262896">
        <id>Q8IY82</id>
        <label>DRC7</label>
    </interactant>
    <organismsDiffer>false</organismsDiffer>
    <experiments>3</experiments>
</comment>
<comment type="interaction">
    <interactant intactId="EBI-10182361">
        <id>Q9NS73-5</id>
    </interactant>
    <interactant intactId="EBI-742102">
        <id>Q8IYI6</id>
        <label>EXOC8</label>
    </interactant>
    <organismsDiffer>false</organismsDiffer>
    <experiments>3</experiments>
</comment>
<comment type="interaction">
    <interactant intactId="EBI-10182361">
        <id>Q9NS73-5</id>
    </interactant>
    <interactant intactId="EBI-348399">
        <id>P22607</id>
        <label>FGFR3</label>
    </interactant>
    <organismsDiffer>false</organismsDiffer>
    <experiments>3</experiments>
</comment>
<comment type="interaction">
    <interactant intactId="EBI-10182361">
        <id>Q9NS73-5</id>
    </interactant>
    <interactant intactId="EBI-488533">
        <id>Q8WYH8</id>
        <label>ING5</label>
    </interactant>
    <organismsDiffer>false</organismsDiffer>
    <experiments>3</experiments>
</comment>
<comment type="interaction">
    <interactant intactId="EBI-10182361">
        <id>Q9NS73-5</id>
    </interactant>
    <interactant intactId="EBI-750907">
        <id>Q9H8E8</id>
        <label>KAT14</label>
    </interactant>
    <organismsDiffer>false</organismsDiffer>
    <experiments>3</experiments>
</comment>
<comment type="interaction">
    <interactant intactId="EBI-10182361">
        <id>Q9NS73-5</id>
    </interactant>
    <interactant intactId="EBI-10975473">
        <id>O60333-2</id>
        <label>KIF1B</label>
    </interactant>
    <organismsDiffer>false</organismsDiffer>
    <experiments>3</experiments>
</comment>
<comment type="interaction">
    <interactant intactId="EBI-10182361">
        <id>Q9NS73-5</id>
    </interactant>
    <interactant intactId="EBI-1643885">
        <id>Q6P597</id>
        <label>KLC3</label>
    </interactant>
    <organismsDiffer>false</organismsDiffer>
    <experiments>3</experiments>
</comment>
<comment type="interaction">
    <interactant intactId="EBI-10182361">
        <id>Q9NS73-5</id>
    </interactant>
    <interactant intactId="EBI-739696">
        <id>P25791</id>
        <label>LMO2</label>
    </interactant>
    <organismsDiffer>false</organismsDiffer>
    <experiments>3</experiments>
</comment>
<comment type="interaction">
    <interactant intactId="EBI-10182361">
        <id>Q9NS73-5</id>
    </interactant>
    <interactant intactId="EBI-355924">
        <id>P33993</id>
        <label>MCM7</label>
    </interactant>
    <organismsDiffer>false</organismsDiffer>
    <experiments>3</experiments>
</comment>
<comment type="interaction">
    <interactant intactId="EBI-10182361">
        <id>Q9NS73-5</id>
    </interactant>
    <interactant intactId="EBI-1104552">
        <id>Q9NYP9</id>
        <label>MIS18A</label>
    </interactant>
    <organismsDiffer>false</organismsDiffer>
    <experiments>3</experiments>
</comment>
<comment type="interaction">
    <interactant intactId="EBI-10182361">
        <id>Q9NS73-5</id>
    </interactant>
    <interactant intactId="EBI-739825">
        <id>Q96BY2</id>
        <label>MOAP1</label>
    </interactant>
    <organismsDiffer>false</organismsDiffer>
    <experiments>3</experiments>
</comment>
<comment type="interaction">
    <interactant intactId="EBI-10182361">
        <id>Q9NS73-5</id>
    </interactant>
    <interactant intactId="EBI-928842">
        <id>Q9GZM8</id>
        <label>NDEL1</label>
    </interactant>
    <organismsDiffer>false</organismsDiffer>
    <experiments>3</experiments>
</comment>
<comment type="interaction">
    <interactant intactId="EBI-10182361">
        <id>Q9NS73-5</id>
    </interactant>
    <interactant intactId="EBI-475646">
        <id>P07196</id>
        <label>NEFL</label>
    </interactant>
    <organismsDiffer>false</organismsDiffer>
    <experiments>3</experiments>
</comment>
<comment type="interaction">
    <interactant intactId="EBI-10182361">
        <id>Q9NS73-5</id>
    </interactant>
    <interactant intactId="EBI-716404">
        <id>P16284</id>
        <label>PECAM1</label>
    </interactant>
    <organismsDiffer>false</organismsDiffer>
    <experiments>3</experiments>
</comment>
<comment type="interaction">
    <interactant intactId="EBI-10182361">
        <id>Q9NS73-5</id>
    </interactant>
    <interactant intactId="EBI-988601">
        <id>O43933</id>
        <label>PEX1</label>
    </interactant>
    <organismsDiffer>false</organismsDiffer>
    <experiments>3</experiments>
</comment>
<comment type="interaction">
    <interactant intactId="EBI-10182361">
        <id>Q9NS73-5</id>
    </interactant>
    <interactant intactId="EBI-742388">
        <id>Q9H8W4</id>
        <label>PLEKHF2</label>
    </interactant>
    <organismsDiffer>false</organismsDiffer>
    <experiments>3</experiments>
</comment>
<comment type="interaction">
    <interactant intactId="EBI-10182361">
        <id>Q9NS73-5</id>
    </interactant>
    <interactant intactId="EBI-1055079">
        <id>O15160</id>
        <label>POLR1C</label>
    </interactant>
    <organismsDiffer>false</organismsDiffer>
    <experiments>3</experiments>
</comment>
<comment type="interaction">
    <interactant intactId="EBI-10182361">
        <id>Q9NS73-5</id>
    </interactant>
    <interactant intactId="EBI-399437">
        <id>P20339</id>
        <label>RAB5A</label>
    </interactant>
    <organismsDiffer>false</organismsDiffer>
    <experiments>3</experiments>
</comment>
<comment type="interaction">
    <interactant intactId="EBI-10182361">
        <id>Q9NS73-5</id>
    </interactant>
    <interactant intactId="EBI-746389">
        <id>P52306</id>
        <label>RAP1GDS1</label>
    </interactant>
    <organismsDiffer>false</organismsDiffer>
    <experiments>3</experiments>
</comment>
<comment type="interaction">
    <interactant intactId="EBI-10182361">
        <id>Q9NS73-5</id>
    </interactant>
    <interactant intactId="EBI-714135">
        <id>O75558</id>
        <label>STX11</label>
    </interactant>
    <organismsDiffer>false</organismsDiffer>
    <experiments>3</experiments>
</comment>
<comment type="interaction">
    <interactant intactId="EBI-10182361">
        <id>Q9NS73-5</id>
    </interactant>
    <interactant intactId="EBI-8063723">
        <id>Q8IUE0</id>
        <label>TGIF2LY</label>
    </interactant>
    <organismsDiffer>false</organismsDiffer>
    <experiments>3</experiments>
</comment>
<comment type="interaction">
    <interactant intactId="EBI-10182361">
        <id>Q9NS73-5</id>
    </interactant>
    <interactant intactId="EBI-359793">
        <id>P40222</id>
        <label>TXLNA</label>
    </interactant>
    <organismsDiffer>false</organismsDiffer>
    <experiments>3</experiments>
</comment>
<comment type="interaction">
    <interactant intactId="EBI-10182361">
        <id>Q9NS73-5</id>
    </interactant>
    <interactant intactId="EBI-6116822">
        <id>Q8N3L3</id>
        <label>TXLNB</label>
    </interactant>
    <organismsDiffer>false</organismsDiffer>
    <experiments>3</experiments>
</comment>
<comment type="interaction">
    <interactant intactId="EBI-10182361">
        <id>Q9NS73-5</id>
    </interactant>
    <interactant intactId="EBI-353844">
        <id>P08670</id>
        <label>VIM</label>
    </interactant>
    <organismsDiffer>false</organismsDiffer>
    <experiments>3</experiments>
</comment>
<comment type="interaction">
    <interactant intactId="EBI-10182361">
        <id>Q9NS73-5</id>
    </interactant>
    <interactant intactId="EBI-10243107">
        <id>Q548N1</id>
        <label>VPS28</label>
    </interactant>
    <organismsDiffer>false</organismsDiffer>
    <experiments>3</experiments>
</comment>
<comment type="interaction">
    <interactant intactId="EBI-10182361">
        <id>Q9NS73-5</id>
    </interactant>
    <interactant intactId="EBI-727424">
        <id>Q9UK41</id>
        <label>VPS28</label>
    </interactant>
    <organismsDiffer>false</organismsDiffer>
    <experiments>3</experiments>
</comment>
<comment type="interaction">
    <interactant intactId="EBI-10182361">
        <id>Q9NS73-5</id>
    </interactant>
    <interactant intactId="EBI-540834">
        <id>P61964</id>
        <label>WDR5</label>
    </interactant>
    <organismsDiffer>false</organismsDiffer>
    <experiments>4</experiments>
</comment>
<comment type="interaction">
    <interactant intactId="EBI-10182361">
        <id>Q9NS73-5</id>
    </interactant>
    <interactant intactId="EBI-720609">
        <id>O76024</id>
        <label>WFS1</label>
    </interactant>
    <organismsDiffer>false</organismsDiffer>
    <experiments>3</experiments>
</comment>
<comment type="interaction">
    <interactant intactId="EBI-10182361">
        <id>Q9NS73-5</id>
    </interactant>
    <interactant intactId="EBI-25900580">
        <id>Q9Y649</id>
    </interactant>
    <organismsDiffer>false</organismsDiffer>
    <experiments>3</experiments>
</comment>
<comment type="subcellular location">
    <subcellularLocation>
        <location>Nucleus</location>
    </subcellularLocation>
    <subcellularLocation>
        <location>Cytoplasm</location>
    </subcellularLocation>
    <text>Shows a cytoplasmic localization when coexpressed with MAP3K12.</text>
</comment>
<comment type="alternative products">
    <event type="alternative splicing"/>
    <isoform>
        <id>Q9NS73-1</id>
        <name>1</name>
        <sequence type="displayed"/>
    </isoform>
    <isoform>
        <id>Q9NS73-2</id>
        <name>2</name>
        <sequence type="described" ref="VSP_010266"/>
    </isoform>
    <isoform>
        <id>Q9NS73-3</id>
        <name>3</name>
        <sequence type="described" ref="VSP_010265"/>
    </isoform>
    <isoform>
        <id>Q9NS73-5</id>
        <name>4</name>
        <sequence type="described" ref="VSP_040134"/>
    </isoform>
</comment>
<comment type="tissue specificity">
    <text>Ubiquitous. High expression seen in the heart and lung.</text>
</comment>
<comment type="sequence caution" evidence="10">
    <conflict type="erroneous initiation">
        <sequence resource="EMBL-CDS" id="CAD62615"/>
    </conflict>
    <text>Extended N-terminus.</text>
</comment>
<keyword id="KW-0007">Acetylation</keyword>
<keyword id="KW-0025">Alternative splicing</keyword>
<keyword id="KW-0963">Cytoplasm</keyword>
<keyword id="KW-1017">Isopeptide bond</keyword>
<keyword id="KW-0539">Nucleus</keyword>
<keyword id="KW-0597">Phosphoprotein</keyword>
<keyword id="KW-1267">Proteomics identification</keyword>
<keyword id="KW-1185">Reference proteome</keyword>
<keyword id="KW-0677">Repeat</keyword>
<keyword id="KW-0832">Ubl conjugation</keyword>
<accession>Q9NS73</accession>
<accession>Q86TZ2</accession>
<accession>Q96AS5</accession>
<accession>Q9BS93</accession>
<accession>Q9NZE1</accession>
<gene>
    <name type="primary">MBIP</name>
    <name type="ORF">BM-015</name>
</gene>
<proteinExistence type="evidence at protein level"/>
<organism>
    <name type="scientific">Homo sapiens</name>
    <name type="common">Human</name>
    <dbReference type="NCBI Taxonomy" id="9606"/>
    <lineage>
        <taxon>Eukaryota</taxon>
        <taxon>Metazoa</taxon>
        <taxon>Chordata</taxon>
        <taxon>Craniata</taxon>
        <taxon>Vertebrata</taxon>
        <taxon>Euteleostomi</taxon>
        <taxon>Mammalia</taxon>
        <taxon>Eutheria</taxon>
        <taxon>Euarchontoglires</taxon>
        <taxon>Primates</taxon>
        <taxon>Haplorrhini</taxon>
        <taxon>Catarrhini</taxon>
        <taxon>Hominidae</taxon>
        <taxon>Homo</taxon>
    </lineage>
</organism>
<feature type="chain" id="PRO_0000096269" description="MAP3K12-binding inhibitory protein 1">
    <location>
        <begin position="1"/>
        <end position="344"/>
    </location>
</feature>
<feature type="region of interest" description="Interaction with MAP3K12">
    <location>
        <begin position="172"/>
        <end position="344"/>
    </location>
</feature>
<feature type="region of interest" description="Leucine-zipper 1" evidence="2">
    <location>
        <begin position="271"/>
        <end position="285"/>
    </location>
</feature>
<feature type="region of interest" description="Leucine-zipper 2" evidence="2">
    <location>
        <begin position="314"/>
        <end position="329"/>
    </location>
</feature>
<feature type="modified residue" description="Phosphoserine" evidence="11 12 13 14">
    <location>
        <position position="91"/>
    </location>
</feature>
<feature type="modified residue" description="N6-acetyllysine; alternate" evidence="1">
    <location>
        <position position="301"/>
    </location>
</feature>
<feature type="cross-link" description="Glycyl lysine isopeptide (Lys-Gly) (interchain with G-Cter in SUMO2)" evidence="15 16 17">
    <location>
        <position position="94"/>
    </location>
</feature>
<feature type="cross-link" description="Glycyl lysine isopeptide (Lys-Gly) (interchain with G-Cter in SUMO2)" evidence="17">
    <location>
        <position position="118"/>
    </location>
</feature>
<feature type="cross-link" description="Glycyl lysine isopeptide (Lys-Gly) (interchain with G-Cter in SUMO2)" evidence="16 17">
    <location>
        <position position="129"/>
    </location>
</feature>
<feature type="cross-link" description="Glycyl lysine isopeptide (Lys-Gly) (interchain with G-Cter in SUMO2)" evidence="17">
    <location>
        <position position="139"/>
    </location>
</feature>
<feature type="cross-link" description="Glycyl lysine isopeptide (Lys-Gly) (interchain with G-Cter in SUMO2)" evidence="17">
    <location>
        <position position="153"/>
    </location>
</feature>
<feature type="cross-link" description="Glycyl lysine isopeptide (Lys-Gly) (interchain with G-Cter in SUMO2)" evidence="17">
    <location>
        <position position="235"/>
    </location>
</feature>
<feature type="cross-link" description="Glycyl lysine isopeptide (Lys-Gly) (interchain with G-Cter in SUMO2); alternate" evidence="17">
    <location>
        <position position="301"/>
    </location>
</feature>
<feature type="cross-link" description="Glycyl lysine isopeptide (Lys-Gly) (interchain with G-Cter in SUMO2)" evidence="17">
    <location>
        <position position="304"/>
    </location>
</feature>
<feature type="cross-link" description="Glycyl lysine isopeptide (Lys-Gly) (interchain with G-Cter in SUMO2)" evidence="17">
    <location>
        <position position="325"/>
    </location>
</feature>
<feature type="splice variant" id="VSP_010265" description="In isoform 3." evidence="9">
    <original>GGPVPRDIYQRIKKLEDKILELEGISPEYFQSVSFSGKRRKVQPPQQNYSLAELDEKISALKQALLRKSREAESMATHHLP</original>
    <variation>ELFWKKKKSSTTSTELFTG</variation>
    <location>
        <begin position="264"/>
        <end position="344"/>
    </location>
</feature>
<feature type="splice variant" id="VSP_010266" description="In isoform 2." evidence="7">
    <original>FSGKRRKVQPPQQNYSLAELDEKISALKQALLRKSREAESMATHHLP</original>
    <variation>L</variation>
    <location>
        <begin position="298"/>
        <end position="344"/>
    </location>
</feature>
<feature type="splice variant" id="VSP_040134" description="In isoform 4." evidence="8">
    <location>
        <position position="309"/>
    </location>
</feature>
<feature type="sequence variant" id="VAR_018449" description="In dbSNP:rs2899849." evidence="3 4 5">
    <original>L</original>
    <variation>H</variation>
    <location>
        <position position="7"/>
    </location>
</feature>
<feature type="sequence variant" id="VAR_034093" description="In dbSNP:rs3168891." evidence="3 4 5">
    <original>R</original>
    <variation>S</variation>
    <location>
        <position position="22"/>
    </location>
</feature>
<feature type="sequence conflict" description="In Ref. 5; AAH05197." evidence="10" ref="5">
    <original>N</original>
    <variation>Y</variation>
    <location>
        <position position="218"/>
    </location>
</feature>